<protein>
    <recommendedName>
        <fullName evidence="1">Ribosomal RNA large subunit methyltransferase E</fullName>
        <ecNumber evidence="1">2.1.1.166</ecNumber>
    </recommendedName>
    <alternativeName>
        <fullName evidence="1">23S rRNA Um2552 methyltransferase</fullName>
    </alternativeName>
    <alternativeName>
        <fullName evidence="1">rRNA (uridine-2'-O-)-methyltransferase</fullName>
    </alternativeName>
</protein>
<sequence>MKDRQDYYYWKAKKEGYRSRAAYKLLQMNRTFKLIREGDLVLDLGATPGGWSQVAALLGARVVAVDINPMKPLENVTFIRGDITLPETLEKIREISPDYDVVMSDASPKISGKWTIDHLRSIDLARASFSIAKEVLKPGGNFVVKVFQGEEIQKFFNELKPHFRFKKFHSPQASRKRSAEVYFIGKRFRKI</sequence>
<organism>
    <name type="scientific">Archaeoglobus fulgidus (strain ATCC 49558 / DSM 4304 / JCM 9628 / NBRC 100126 / VC-16)</name>
    <dbReference type="NCBI Taxonomy" id="224325"/>
    <lineage>
        <taxon>Archaea</taxon>
        <taxon>Methanobacteriati</taxon>
        <taxon>Methanobacteriota</taxon>
        <taxon>Archaeoglobi</taxon>
        <taxon>Archaeoglobales</taxon>
        <taxon>Archaeoglobaceae</taxon>
        <taxon>Archaeoglobus</taxon>
    </lineage>
</organism>
<feature type="chain" id="PRO_0000155563" description="Ribosomal RNA large subunit methyltransferase E">
    <location>
        <begin position="1"/>
        <end position="191"/>
    </location>
</feature>
<feature type="active site" description="Proton acceptor" evidence="1">
    <location>
        <position position="145"/>
    </location>
</feature>
<feature type="binding site" evidence="1">
    <location>
        <position position="49"/>
    </location>
    <ligand>
        <name>S-adenosyl-L-methionine</name>
        <dbReference type="ChEBI" id="CHEBI:59789"/>
    </ligand>
</feature>
<feature type="binding site" evidence="1">
    <location>
        <position position="51"/>
    </location>
    <ligand>
        <name>S-adenosyl-L-methionine</name>
        <dbReference type="ChEBI" id="CHEBI:59789"/>
    </ligand>
</feature>
<feature type="binding site" evidence="1">
    <location>
        <position position="66"/>
    </location>
    <ligand>
        <name>S-adenosyl-L-methionine</name>
        <dbReference type="ChEBI" id="CHEBI:59789"/>
    </ligand>
</feature>
<feature type="binding site" evidence="1">
    <location>
        <position position="82"/>
    </location>
    <ligand>
        <name>S-adenosyl-L-methionine</name>
        <dbReference type="ChEBI" id="CHEBI:59789"/>
    </ligand>
</feature>
<feature type="binding site" evidence="1">
    <location>
        <position position="105"/>
    </location>
    <ligand>
        <name>S-adenosyl-L-methionine</name>
        <dbReference type="ChEBI" id="CHEBI:59789"/>
    </ligand>
</feature>
<dbReference type="EC" id="2.1.1.166" evidence="1"/>
<dbReference type="EMBL" id="AE000782">
    <property type="protein sequence ID" value="AAB89203.1"/>
    <property type="molecule type" value="Genomic_DNA"/>
</dbReference>
<dbReference type="PIR" id="B69506">
    <property type="entry name" value="B69506"/>
</dbReference>
<dbReference type="RefSeq" id="WP_010879543.1">
    <property type="nucleotide sequence ID" value="NC_000917.1"/>
</dbReference>
<dbReference type="SMR" id="O28228"/>
<dbReference type="STRING" id="224325.AF_2051"/>
<dbReference type="PaxDb" id="224325-AF_2051"/>
<dbReference type="EnsemblBacteria" id="AAB89203">
    <property type="protein sequence ID" value="AAB89203"/>
    <property type="gene ID" value="AF_2051"/>
</dbReference>
<dbReference type="KEGG" id="afu:AF_2051"/>
<dbReference type="eggNOG" id="arCOG00079">
    <property type="taxonomic scope" value="Archaea"/>
</dbReference>
<dbReference type="HOGENOM" id="CLU_009422_4_4_2"/>
<dbReference type="OrthoDB" id="26307at2157"/>
<dbReference type="PhylomeDB" id="O28228"/>
<dbReference type="Proteomes" id="UP000002199">
    <property type="component" value="Chromosome"/>
</dbReference>
<dbReference type="GO" id="GO:0005737">
    <property type="term" value="C:cytoplasm"/>
    <property type="evidence" value="ECO:0007669"/>
    <property type="project" value="UniProtKB-SubCell"/>
</dbReference>
<dbReference type="GO" id="GO:0008650">
    <property type="term" value="F:rRNA (uridine-2'-O-)-methyltransferase activity"/>
    <property type="evidence" value="ECO:0007669"/>
    <property type="project" value="UniProtKB-UniRule"/>
</dbReference>
<dbReference type="Gene3D" id="3.40.50.150">
    <property type="entry name" value="Vaccinia Virus protein VP39"/>
    <property type="match status" value="1"/>
</dbReference>
<dbReference type="HAMAP" id="MF_01547">
    <property type="entry name" value="RNA_methyltr_E"/>
    <property type="match status" value="1"/>
</dbReference>
<dbReference type="InterPro" id="IPR050082">
    <property type="entry name" value="RNA_methyltr_RlmE"/>
</dbReference>
<dbReference type="InterPro" id="IPR002877">
    <property type="entry name" value="RNA_MeTrfase_FtsJ_dom"/>
</dbReference>
<dbReference type="InterPro" id="IPR015507">
    <property type="entry name" value="rRNA-MeTfrase_E"/>
</dbReference>
<dbReference type="InterPro" id="IPR029063">
    <property type="entry name" value="SAM-dependent_MTases_sf"/>
</dbReference>
<dbReference type="PANTHER" id="PTHR10920:SF13">
    <property type="entry name" value="PRE-RRNA 2'-O-RIBOSE RNA METHYLTRANSFERASE FTSJ3"/>
    <property type="match status" value="1"/>
</dbReference>
<dbReference type="PANTHER" id="PTHR10920">
    <property type="entry name" value="RIBOSOMAL RNA METHYLTRANSFERASE"/>
    <property type="match status" value="1"/>
</dbReference>
<dbReference type="Pfam" id="PF01728">
    <property type="entry name" value="FtsJ"/>
    <property type="match status" value="1"/>
</dbReference>
<dbReference type="PIRSF" id="PIRSF005461">
    <property type="entry name" value="23S_rRNA_mtase"/>
    <property type="match status" value="1"/>
</dbReference>
<dbReference type="SUPFAM" id="SSF53335">
    <property type="entry name" value="S-adenosyl-L-methionine-dependent methyltransferases"/>
    <property type="match status" value="1"/>
</dbReference>
<proteinExistence type="inferred from homology"/>
<comment type="function">
    <text evidence="1">Specifically methylates the uridine in position 2552 of 23S rRNA at the 2'-O position of the ribose in the fully assembled 50S ribosomal subunit.</text>
</comment>
<comment type="catalytic activity">
    <reaction evidence="1">
        <text>uridine(2552) in 23S rRNA + S-adenosyl-L-methionine = 2'-O-methyluridine(2552) in 23S rRNA + S-adenosyl-L-homocysteine + H(+)</text>
        <dbReference type="Rhea" id="RHEA:42720"/>
        <dbReference type="Rhea" id="RHEA-COMP:10202"/>
        <dbReference type="Rhea" id="RHEA-COMP:10203"/>
        <dbReference type="ChEBI" id="CHEBI:15378"/>
        <dbReference type="ChEBI" id="CHEBI:57856"/>
        <dbReference type="ChEBI" id="CHEBI:59789"/>
        <dbReference type="ChEBI" id="CHEBI:65315"/>
        <dbReference type="ChEBI" id="CHEBI:74478"/>
        <dbReference type="EC" id="2.1.1.166"/>
    </reaction>
</comment>
<comment type="subcellular location">
    <subcellularLocation>
        <location evidence="1">Cytoplasm</location>
    </subcellularLocation>
</comment>
<comment type="similarity">
    <text evidence="1">Belongs to the class I-like SAM-binding methyltransferase superfamily. RNA methyltransferase RlmE family.</text>
</comment>
<gene>
    <name evidence="1" type="primary">rlmE</name>
    <name evidence="1" type="synonym">rrmJ</name>
    <name type="ordered locus">AF_2051</name>
</gene>
<reference key="1">
    <citation type="journal article" date="1997" name="Nature">
        <title>The complete genome sequence of the hyperthermophilic, sulphate-reducing archaeon Archaeoglobus fulgidus.</title>
        <authorList>
            <person name="Klenk H.-P."/>
            <person name="Clayton R.A."/>
            <person name="Tomb J.-F."/>
            <person name="White O."/>
            <person name="Nelson K.E."/>
            <person name="Ketchum K.A."/>
            <person name="Dodson R.J."/>
            <person name="Gwinn M.L."/>
            <person name="Hickey E.K."/>
            <person name="Peterson J.D."/>
            <person name="Richardson D.L."/>
            <person name="Kerlavage A.R."/>
            <person name="Graham D.E."/>
            <person name="Kyrpides N.C."/>
            <person name="Fleischmann R.D."/>
            <person name="Quackenbush J."/>
            <person name="Lee N.H."/>
            <person name="Sutton G.G."/>
            <person name="Gill S.R."/>
            <person name="Kirkness E.F."/>
            <person name="Dougherty B.A."/>
            <person name="McKenney K."/>
            <person name="Adams M.D."/>
            <person name="Loftus B.J."/>
            <person name="Peterson S.N."/>
            <person name="Reich C.I."/>
            <person name="McNeil L.K."/>
            <person name="Badger J.H."/>
            <person name="Glodek A."/>
            <person name="Zhou L."/>
            <person name="Overbeek R."/>
            <person name="Gocayne J.D."/>
            <person name="Weidman J.F."/>
            <person name="McDonald L.A."/>
            <person name="Utterback T.R."/>
            <person name="Cotton M.D."/>
            <person name="Spriggs T."/>
            <person name="Artiach P."/>
            <person name="Kaine B.P."/>
            <person name="Sykes S.M."/>
            <person name="Sadow P.W."/>
            <person name="D'Andrea K.P."/>
            <person name="Bowman C."/>
            <person name="Fujii C."/>
            <person name="Garland S.A."/>
            <person name="Mason T.M."/>
            <person name="Olsen G.J."/>
            <person name="Fraser C.M."/>
            <person name="Smith H.O."/>
            <person name="Woese C.R."/>
            <person name="Venter J.C."/>
        </authorList>
    </citation>
    <scope>NUCLEOTIDE SEQUENCE [LARGE SCALE GENOMIC DNA]</scope>
    <source>
        <strain>ATCC 49558 / DSM 4304 / JCM 9628 / NBRC 100126 / VC-16</strain>
    </source>
</reference>
<evidence type="ECO:0000255" key="1">
    <source>
        <dbReference type="HAMAP-Rule" id="MF_01547"/>
    </source>
</evidence>
<name>RLME_ARCFU</name>
<keyword id="KW-0963">Cytoplasm</keyword>
<keyword id="KW-0489">Methyltransferase</keyword>
<keyword id="KW-1185">Reference proteome</keyword>
<keyword id="KW-0698">rRNA processing</keyword>
<keyword id="KW-0949">S-adenosyl-L-methionine</keyword>
<keyword id="KW-0808">Transferase</keyword>
<accession>O28228</accession>